<reference key="1">
    <citation type="journal article" date="2003" name="J. Neurocytol.">
        <title>Expression of the mitotic kinesin Kif15 in postmitotic neurons: implications for neuronal migration and development.</title>
        <authorList>
            <person name="Buster D.W."/>
            <person name="Baird D.H."/>
            <person name="Yu W."/>
            <person name="Solowska J.M."/>
            <person name="Chauviere M."/>
            <person name="Mazurek A."/>
            <person name="Kress M."/>
            <person name="Baas P.W."/>
        </authorList>
    </citation>
    <scope>NUCLEOTIDE SEQUENCE [MRNA]</scope>
    <scope>SUBCELLULAR LOCATION</scope>
    <scope>TISSUE SPECIFICITY</scope>
    <scope>DEVELOPMENTAL STAGE</scope>
    <source>
        <strain>Sprague-Dawley</strain>
        <tissue>Brain</tissue>
    </source>
</reference>
<dbReference type="EMBL" id="AY291580">
    <property type="protein sequence ID" value="AAP44512.1"/>
    <property type="molecule type" value="mRNA"/>
</dbReference>
<dbReference type="EMBL" id="AY291581">
    <property type="protein sequence ID" value="AAP44513.1"/>
    <property type="molecule type" value="mRNA"/>
</dbReference>
<dbReference type="RefSeq" id="NP_853666.1">
    <property type="nucleotide sequence ID" value="NM_181635.2"/>
</dbReference>
<dbReference type="SMR" id="Q7TSP2"/>
<dbReference type="CORUM" id="Q7TSP2"/>
<dbReference type="FunCoup" id="Q7TSP2">
    <property type="interactions" value="548"/>
</dbReference>
<dbReference type="STRING" id="10116.ENSRNOP00000071501"/>
<dbReference type="iPTMnet" id="Q7TSP2"/>
<dbReference type="PhosphoSitePlus" id="Q7TSP2"/>
<dbReference type="jPOST" id="Q7TSP2"/>
<dbReference type="PaxDb" id="10116-ENSRNOP00000030707"/>
<dbReference type="GeneID" id="353302"/>
<dbReference type="KEGG" id="rno:353302"/>
<dbReference type="UCSC" id="RGD:727790">
    <property type="organism name" value="rat"/>
</dbReference>
<dbReference type="AGR" id="RGD:727790"/>
<dbReference type="CTD" id="56992"/>
<dbReference type="RGD" id="727790">
    <property type="gene designation" value="Kif15"/>
</dbReference>
<dbReference type="eggNOG" id="KOG4280">
    <property type="taxonomic scope" value="Eukaryota"/>
</dbReference>
<dbReference type="InParanoid" id="Q7TSP2"/>
<dbReference type="OrthoDB" id="3176171at2759"/>
<dbReference type="PhylomeDB" id="Q7TSP2"/>
<dbReference type="Reactome" id="R-RNO-2132295">
    <property type="pathway name" value="MHC class II antigen presentation"/>
</dbReference>
<dbReference type="Reactome" id="R-RNO-6811434">
    <property type="pathway name" value="COPI-dependent Golgi-to-ER retrograde traffic"/>
</dbReference>
<dbReference type="Reactome" id="R-RNO-983189">
    <property type="pathway name" value="Kinesins"/>
</dbReference>
<dbReference type="PRO" id="PR:Q7TSP2"/>
<dbReference type="Proteomes" id="UP000002494">
    <property type="component" value="Unplaced"/>
</dbReference>
<dbReference type="GO" id="GO:0005737">
    <property type="term" value="C:cytoplasm"/>
    <property type="evidence" value="ECO:0000318"/>
    <property type="project" value="GO_Central"/>
</dbReference>
<dbReference type="GO" id="GO:0005871">
    <property type="term" value="C:kinesin complex"/>
    <property type="evidence" value="ECO:0000318"/>
    <property type="project" value="GO_Central"/>
</dbReference>
<dbReference type="GO" id="GO:0005874">
    <property type="term" value="C:microtubule"/>
    <property type="evidence" value="ECO:0000318"/>
    <property type="project" value="GO_Central"/>
</dbReference>
<dbReference type="GO" id="GO:0000922">
    <property type="term" value="C:spindle pole"/>
    <property type="evidence" value="ECO:0000250"/>
    <property type="project" value="UniProtKB"/>
</dbReference>
<dbReference type="GO" id="GO:0005524">
    <property type="term" value="F:ATP binding"/>
    <property type="evidence" value="ECO:0007669"/>
    <property type="project" value="UniProtKB-KW"/>
</dbReference>
<dbReference type="GO" id="GO:0016887">
    <property type="term" value="F:ATP hydrolysis activity"/>
    <property type="evidence" value="ECO:0000318"/>
    <property type="project" value="GO_Central"/>
</dbReference>
<dbReference type="GO" id="GO:0008017">
    <property type="term" value="F:microtubule binding"/>
    <property type="evidence" value="ECO:0000318"/>
    <property type="project" value="GO_Central"/>
</dbReference>
<dbReference type="GO" id="GO:0003777">
    <property type="term" value="F:microtubule motor activity"/>
    <property type="evidence" value="ECO:0000318"/>
    <property type="project" value="GO_Central"/>
</dbReference>
<dbReference type="GO" id="GO:0008574">
    <property type="term" value="F:plus-end-directed microtubule motor activity"/>
    <property type="evidence" value="ECO:0000250"/>
    <property type="project" value="UniProtKB"/>
</dbReference>
<dbReference type="GO" id="GO:0051299">
    <property type="term" value="P:centrosome separation"/>
    <property type="evidence" value="ECO:0000250"/>
    <property type="project" value="UniProtKB"/>
</dbReference>
<dbReference type="GO" id="GO:0007018">
    <property type="term" value="P:microtubule-based movement"/>
    <property type="evidence" value="ECO:0000318"/>
    <property type="project" value="GO_Central"/>
</dbReference>
<dbReference type="GO" id="GO:0090307">
    <property type="term" value="P:mitotic spindle assembly"/>
    <property type="evidence" value="ECO:0000250"/>
    <property type="project" value="UniProtKB"/>
</dbReference>
<dbReference type="CDD" id="cd01373">
    <property type="entry name" value="KISc_KLP2_like"/>
    <property type="match status" value="1"/>
</dbReference>
<dbReference type="FunFam" id="3.40.850.10:FF:000034">
    <property type="entry name" value="Kinesin family member 15"/>
    <property type="match status" value="1"/>
</dbReference>
<dbReference type="Gene3D" id="3.40.850.10">
    <property type="entry name" value="Kinesin motor domain"/>
    <property type="match status" value="1"/>
</dbReference>
<dbReference type="InterPro" id="IPR031794">
    <property type="entry name" value="HMMR_C"/>
</dbReference>
<dbReference type="InterPro" id="IPR044986">
    <property type="entry name" value="KIF15/KIN-12"/>
</dbReference>
<dbReference type="InterPro" id="IPR001752">
    <property type="entry name" value="Kinesin_motor_dom"/>
</dbReference>
<dbReference type="InterPro" id="IPR036961">
    <property type="entry name" value="Kinesin_motor_dom_sf"/>
</dbReference>
<dbReference type="InterPro" id="IPR027417">
    <property type="entry name" value="P-loop_NTPase"/>
</dbReference>
<dbReference type="PANTHER" id="PTHR37739">
    <property type="entry name" value="KINESIN-LIKE PROTEIN KIN-12D"/>
    <property type="match status" value="1"/>
</dbReference>
<dbReference type="PANTHER" id="PTHR37739:SF8">
    <property type="entry name" value="KINESIN-LIKE PROTEIN KIN-12D"/>
    <property type="match status" value="1"/>
</dbReference>
<dbReference type="Pfam" id="PF15908">
    <property type="entry name" value="HMMR_C"/>
    <property type="match status" value="1"/>
</dbReference>
<dbReference type="Pfam" id="PF00225">
    <property type="entry name" value="Kinesin"/>
    <property type="match status" value="1"/>
</dbReference>
<dbReference type="PRINTS" id="PR00380">
    <property type="entry name" value="KINESINHEAVY"/>
</dbReference>
<dbReference type="SMART" id="SM00129">
    <property type="entry name" value="KISc"/>
    <property type="match status" value="1"/>
</dbReference>
<dbReference type="SUPFAM" id="SSF52540">
    <property type="entry name" value="P-loop containing nucleoside triphosphate hydrolases"/>
    <property type="match status" value="1"/>
</dbReference>
<dbReference type="PROSITE" id="PS50067">
    <property type="entry name" value="KINESIN_MOTOR_2"/>
    <property type="match status" value="1"/>
</dbReference>
<feature type="chain" id="PRO_0000328686" description="Kinesin-like protein KIF15">
    <location>
        <begin position="1"/>
        <end position="1385"/>
    </location>
</feature>
<feature type="domain" description="Kinesin motor" evidence="4">
    <location>
        <begin position="26"/>
        <end position="363"/>
    </location>
</feature>
<feature type="region of interest" description="Disordered" evidence="5">
    <location>
        <begin position="1"/>
        <end position="24"/>
    </location>
</feature>
<feature type="region of interest" description="Disordered" evidence="5">
    <location>
        <begin position="1222"/>
        <end position="1243"/>
    </location>
</feature>
<feature type="coiled-coil region" evidence="3">
    <location>
        <begin position="368"/>
        <end position="1385"/>
    </location>
</feature>
<feature type="compositionally biased region" description="Polar residues" evidence="5">
    <location>
        <begin position="10"/>
        <end position="21"/>
    </location>
</feature>
<feature type="compositionally biased region" description="Polar residues" evidence="5">
    <location>
        <begin position="1228"/>
        <end position="1241"/>
    </location>
</feature>
<feature type="binding site" evidence="4">
    <location>
        <begin position="109"/>
        <end position="116"/>
    </location>
    <ligand>
        <name>ATP</name>
        <dbReference type="ChEBI" id="CHEBI:30616"/>
    </ligand>
</feature>
<feature type="modified residue" description="N6-acetyllysine" evidence="2">
    <location>
        <position position="1007"/>
    </location>
</feature>
<feature type="modified residue" description="Phosphoserine" evidence="2">
    <location>
        <position position="1139"/>
    </location>
</feature>
<feature type="modified residue" description="Phosphoserine" evidence="2">
    <location>
        <position position="1167"/>
    </location>
</feature>
<feature type="sequence conflict" description="In Ref. 1; AAP44512." evidence="7" ref="1">
    <original>L</original>
    <variation>R</variation>
    <location>
        <position position="473"/>
    </location>
</feature>
<feature type="sequence conflict" description="In Ref. 1; AAP44512." evidence="7" ref="1">
    <original>K</original>
    <variation>I</variation>
    <location>
        <position position="562"/>
    </location>
</feature>
<feature type="sequence conflict" description="In Ref. 1; AAP44512." evidence="7" ref="1">
    <original>E</original>
    <variation>D</variation>
    <location>
        <position position="835"/>
    </location>
</feature>
<keyword id="KW-0007">Acetylation</keyword>
<keyword id="KW-0067">ATP-binding</keyword>
<keyword id="KW-0175">Coiled coil</keyword>
<keyword id="KW-0963">Cytoplasm</keyword>
<keyword id="KW-0206">Cytoskeleton</keyword>
<keyword id="KW-0493">Microtubule</keyword>
<keyword id="KW-0505">Motor protein</keyword>
<keyword id="KW-0547">Nucleotide-binding</keyword>
<keyword id="KW-0597">Phosphoprotein</keyword>
<keyword id="KW-1185">Reference proteome</keyword>
<organism>
    <name type="scientific">Rattus norvegicus</name>
    <name type="common">Rat</name>
    <dbReference type="NCBI Taxonomy" id="10116"/>
    <lineage>
        <taxon>Eukaryota</taxon>
        <taxon>Metazoa</taxon>
        <taxon>Chordata</taxon>
        <taxon>Craniata</taxon>
        <taxon>Vertebrata</taxon>
        <taxon>Euteleostomi</taxon>
        <taxon>Mammalia</taxon>
        <taxon>Eutheria</taxon>
        <taxon>Euarchontoglires</taxon>
        <taxon>Glires</taxon>
        <taxon>Rodentia</taxon>
        <taxon>Myomorpha</taxon>
        <taxon>Muroidea</taxon>
        <taxon>Muridae</taxon>
        <taxon>Murinae</taxon>
        <taxon>Rattus</taxon>
    </lineage>
</organism>
<sequence>MAPGCKSELRNVTNSHSNQPSNEDDAIKVFVRIRPAEEGARSADGEQSLCLSVLSQTALRLHSNPDPKTFVFDYVAGMDTTQESVFSTVAKSIVESCMSGYNGTIFAYGQTGSGKTFTMMGPSDSDNFSHNLRGVIPRSFEYLFSLIDREKEKAGAGKSFLCKCSFIEVYNEQIYDLLDSASVGLYLREHIKKGVFVVGAVEQVVASAAEAYQVLSRGWRNRRVASTSMNRESSRSHAVFTITIESMEKSSEAVNIRTSLLNLVDLAGSERQKDTHAEGMRLKEAGNINRSLSCLGQVITALVDVGNGKQRHVCYRDSKLTFLLRDSLGGNAKTAIIANVHPGSRCFGETLSTLNFAQRAKLIKNKAVVNEDTQGNVSQLQAEVKRLREQLSQFTSGQLTPGSSLARDKEKANYMEYFLEAMLFFKKSEQEKKSLVEKITQLEDLTLKKEKFIQSNKMIVKFREDQIMRLERLQKEARGSFLPEEQDRLLSELRDEIRTLREQVEHHPRLAKYAMENHSLREENRKLKLLAPVKRAHELDAQAIARLEQAFSEVSSTETNDKGLQGLPPKAIKEPSFFTSTEKLKVQLLQIQTELNNSKQEYEEFKELTRKKQLELESELQSLQKANLNLENLLEATKVCKRQEVSQLNKIHAETLKIITTPTKAYQLCSRLVPKSSPEVGSFGFLRSQSAPDNDILNEPVPPEMSEQALEAISEELRTVQEQLSVLQVKLDEEEHKNLKLQQNVDRLEHHSTQMQELFSSERSDWSKQQQDYLTQLSDLEKQLQDAQTKNDFLKCEVHDLRIVLNSADKELSLVKLEYSTFKESQEKELSQLSERHVQVQLQLDNARLENEKLLESQACLQDSYDNLQEVMKFEVDQLSKNLQNCKQENETLKSDLHNLVELFEAEKERNNKLSLQFEEDKENSSKEILKALETVRQEKQEEMARCEKQMAKVQELEESLLAAENVVSCLEKSRESDKELVTNLMNQIQELRTSAGEKSEAIDTLKQELQDISCKYTAAVADKEESKELIRRQEVDILELKETLRLRILSEDIERDMLCEDLAHATEQLNMLTEASKKHSGLLQSAQEELTKKEALIQELQHKLNQEKEEVEQKKSEYNLKMKQLEHVMGSAPEYPQSPKTPPHFQTHLAKLLETQEQEIEDGRASKMSLQHLVTKLNEDREVKNAEILRMKDQLCEMENLRLESQQLRERTWLLQTQLDDMKRQGESSSQSRPDSQQLKNEYEEEIIRERLAKNKLIEEMLKMKTDLEEVQSALDSKEKFCHRMSEEVERTRTLESRAFQEKEQLRSKLEEMYEERERTCQEMEMLRKQLEFLAEENGKLIGHQNLHQKIQYVVRLKKENIRLAEETEKLRAENVFLKERKKE</sequence>
<gene>
    <name type="primary">Kif15</name>
    <name type="synonym">Klp2</name>
</gene>
<name>KIF15_RAT</name>
<comment type="function">
    <text evidence="1">Plus-end directed kinesin-like motor enzyme involved in mitotic spindle assembly.</text>
</comment>
<comment type="subunit">
    <text evidence="1">Interacts with MKI67 and TPX2.</text>
</comment>
<comment type="subcellular location">
    <subcellularLocation>
        <location evidence="1">Cytoplasm</location>
    </subcellularLocation>
    <subcellularLocation>
        <location evidence="6">Cytoplasm</location>
        <location evidence="6">Cytoskeleton</location>
        <location evidence="6">Spindle</location>
    </subcellularLocation>
    <text evidence="1">Colocalizes with TPX2 in mitosis (By similarity). Detected during the interphase in the cytoplasm as finely punctuate pattern and irregularly shaped dots. Localizes at the spindle poles and microtubules prior to anaphase. Localizes at the central spindle at anaphase. Localizes at the sites of invaginating cell membranes, a position that corresponds to the location of the contractile actomyosin ring of dividing cells. Colocalizes with actin in interphase. Colocalizes in dendrites and in growth cone of axons with microtubules.</text>
</comment>
<comment type="tissue specificity">
    <text evidence="6">Expressed in sympathetic neurons.</text>
</comment>
<comment type="developmental stage">
    <text evidence="6">Expressed in brain at 17 dpc and in cerebellum at 19 dpc.</text>
</comment>
<comment type="similarity">
    <text evidence="4">Belongs to the TRAFAC class myosin-kinesin ATPase superfamily. Kinesin family. KLP2 subfamily.</text>
</comment>
<protein>
    <recommendedName>
        <fullName>Kinesin-like protein KIF15</fullName>
    </recommendedName>
    <alternativeName>
        <fullName>Kinesin-like protein 2</fullName>
    </alternativeName>
</protein>
<evidence type="ECO:0000250" key="1"/>
<evidence type="ECO:0000250" key="2">
    <source>
        <dbReference type="UniProtKB" id="Q9NS87"/>
    </source>
</evidence>
<evidence type="ECO:0000255" key="3"/>
<evidence type="ECO:0000255" key="4">
    <source>
        <dbReference type="PROSITE-ProRule" id="PRU00283"/>
    </source>
</evidence>
<evidence type="ECO:0000256" key="5">
    <source>
        <dbReference type="SAM" id="MobiDB-lite"/>
    </source>
</evidence>
<evidence type="ECO:0000269" key="6">
    <source>
    </source>
</evidence>
<evidence type="ECO:0000305" key="7"/>
<accession>Q7TSP2</accession>
<accession>Q7TN17</accession>
<proteinExistence type="evidence at transcript level"/>